<proteinExistence type="evidence at protein level"/>
<name>QCRC_BACSU</name>
<protein>
    <recommendedName>
        <fullName evidence="3">Menaquinol:cytochrome c reductase cytochrome c subunit</fullName>
    </recommendedName>
    <alternativeName>
        <fullName evidence="3">Cytochrome bc complex, cytochrome c subunit</fullName>
    </alternativeName>
</protein>
<evidence type="ECO:0000255" key="1">
    <source>
        <dbReference type="PROSITE-ProRule" id="PRU00433"/>
    </source>
</evidence>
<evidence type="ECO:0000255" key="2">
    <source>
        <dbReference type="PROSITE-ProRule" id="PRU00967"/>
    </source>
</evidence>
<evidence type="ECO:0000303" key="3">
    <source>
    </source>
</evidence>
<evidence type="ECO:0000305" key="4"/>
<evidence type="ECO:0000305" key="5">
    <source>
    </source>
</evidence>
<reference key="1">
    <citation type="journal article" date="1995" name="J. Bacteriol.">
        <title>The cytochrome bc complex (menaquinone:cytochrome c reductase) in Bacillus subtilis has a nontraditional subunit organization.</title>
        <authorList>
            <person name="Yu J."/>
            <person name="Hederstedt L."/>
            <person name="Piggot P.J."/>
        </authorList>
    </citation>
    <scope>NUCLEOTIDE SEQUENCE [GENOMIC DNA]</scope>
    <scope>FUNCTION</scope>
    <scope>SUBUNIT</scope>
    <source>
        <strain>168 / BR151</strain>
    </source>
</reference>
<reference key="2">
    <citation type="journal article" date="1996" name="Microbiology">
        <title>Sequence analysis of the Bacillus subtilis chromosome region between the serA and kdg loci cloned in a yeast artificial chromosome.</title>
        <authorList>
            <person name="Sorokin A.V."/>
            <person name="Azevedo V."/>
            <person name="Zumstein E."/>
            <person name="Galleron N."/>
            <person name="Ehrlich S.D."/>
            <person name="Serror P."/>
        </authorList>
    </citation>
    <scope>NUCLEOTIDE SEQUENCE [GENOMIC DNA]</scope>
    <source>
        <strain>168 / Marburg / ATCC 6051 / DSM 10 / JCM 1465 / NBRC 13719 / NCIMB 3610 / NRRL NRS-744 / VKM B-501</strain>
    </source>
</reference>
<reference key="3">
    <citation type="journal article" date="1997" name="Nature">
        <title>The complete genome sequence of the Gram-positive bacterium Bacillus subtilis.</title>
        <authorList>
            <person name="Kunst F."/>
            <person name="Ogasawara N."/>
            <person name="Moszer I."/>
            <person name="Albertini A.M."/>
            <person name="Alloni G."/>
            <person name="Azevedo V."/>
            <person name="Bertero M.G."/>
            <person name="Bessieres P."/>
            <person name="Bolotin A."/>
            <person name="Borchert S."/>
            <person name="Borriss R."/>
            <person name="Boursier L."/>
            <person name="Brans A."/>
            <person name="Braun M."/>
            <person name="Brignell S.C."/>
            <person name="Bron S."/>
            <person name="Brouillet S."/>
            <person name="Bruschi C.V."/>
            <person name="Caldwell B."/>
            <person name="Capuano V."/>
            <person name="Carter N.M."/>
            <person name="Choi S.-K."/>
            <person name="Codani J.-J."/>
            <person name="Connerton I.F."/>
            <person name="Cummings N.J."/>
            <person name="Daniel R.A."/>
            <person name="Denizot F."/>
            <person name="Devine K.M."/>
            <person name="Duesterhoeft A."/>
            <person name="Ehrlich S.D."/>
            <person name="Emmerson P.T."/>
            <person name="Entian K.-D."/>
            <person name="Errington J."/>
            <person name="Fabret C."/>
            <person name="Ferrari E."/>
            <person name="Foulger D."/>
            <person name="Fritz C."/>
            <person name="Fujita M."/>
            <person name="Fujita Y."/>
            <person name="Fuma S."/>
            <person name="Galizzi A."/>
            <person name="Galleron N."/>
            <person name="Ghim S.-Y."/>
            <person name="Glaser P."/>
            <person name="Goffeau A."/>
            <person name="Golightly E.J."/>
            <person name="Grandi G."/>
            <person name="Guiseppi G."/>
            <person name="Guy B.J."/>
            <person name="Haga K."/>
            <person name="Haiech J."/>
            <person name="Harwood C.R."/>
            <person name="Henaut A."/>
            <person name="Hilbert H."/>
            <person name="Holsappel S."/>
            <person name="Hosono S."/>
            <person name="Hullo M.-F."/>
            <person name="Itaya M."/>
            <person name="Jones L.-M."/>
            <person name="Joris B."/>
            <person name="Karamata D."/>
            <person name="Kasahara Y."/>
            <person name="Klaerr-Blanchard M."/>
            <person name="Klein C."/>
            <person name="Kobayashi Y."/>
            <person name="Koetter P."/>
            <person name="Koningstein G."/>
            <person name="Krogh S."/>
            <person name="Kumano M."/>
            <person name="Kurita K."/>
            <person name="Lapidus A."/>
            <person name="Lardinois S."/>
            <person name="Lauber J."/>
            <person name="Lazarevic V."/>
            <person name="Lee S.-M."/>
            <person name="Levine A."/>
            <person name="Liu H."/>
            <person name="Masuda S."/>
            <person name="Mauel C."/>
            <person name="Medigue C."/>
            <person name="Medina N."/>
            <person name="Mellado R.P."/>
            <person name="Mizuno M."/>
            <person name="Moestl D."/>
            <person name="Nakai S."/>
            <person name="Noback M."/>
            <person name="Noone D."/>
            <person name="O'Reilly M."/>
            <person name="Ogawa K."/>
            <person name="Ogiwara A."/>
            <person name="Oudega B."/>
            <person name="Park S.-H."/>
            <person name="Parro V."/>
            <person name="Pohl T.M."/>
            <person name="Portetelle D."/>
            <person name="Porwollik S."/>
            <person name="Prescott A.M."/>
            <person name="Presecan E."/>
            <person name="Pujic P."/>
            <person name="Purnelle B."/>
            <person name="Rapoport G."/>
            <person name="Rey M."/>
            <person name="Reynolds S."/>
            <person name="Rieger M."/>
            <person name="Rivolta C."/>
            <person name="Rocha E."/>
            <person name="Roche B."/>
            <person name="Rose M."/>
            <person name="Sadaie Y."/>
            <person name="Sato T."/>
            <person name="Scanlan E."/>
            <person name="Schleich S."/>
            <person name="Schroeter R."/>
            <person name="Scoffone F."/>
            <person name="Sekiguchi J."/>
            <person name="Sekowska A."/>
            <person name="Seror S.J."/>
            <person name="Serror P."/>
            <person name="Shin B.-S."/>
            <person name="Soldo B."/>
            <person name="Sorokin A."/>
            <person name="Tacconi E."/>
            <person name="Takagi T."/>
            <person name="Takahashi H."/>
            <person name="Takemaru K."/>
            <person name="Takeuchi M."/>
            <person name="Tamakoshi A."/>
            <person name="Tanaka T."/>
            <person name="Terpstra P."/>
            <person name="Tognoni A."/>
            <person name="Tosato V."/>
            <person name="Uchiyama S."/>
            <person name="Vandenbol M."/>
            <person name="Vannier F."/>
            <person name="Vassarotti A."/>
            <person name="Viari A."/>
            <person name="Wambutt R."/>
            <person name="Wedler E."/>
            <person name="Wedler H."/>
            <person name="Weitzenegger T."/>
            <person name="Winters P."/>
            <person name="Wipat A."/>
            <person name="Yamamoto H."/>
            <person name="Yamane K."/>
            <person name="Yasumoto K."/>
            <person name="Yata K."/>
            <person name="Yoshida K."/>
            <person name="Yoshikawa H.-F."/>
            <person name="Zumstein E."/>
            <person name="Yoshikawa H."/>
            <person name="Danchin A."/>
        </authorList>
    </citation>
    <scope>NUCLEOTIDE SEQUENCE [LARGE SCALE GENOMIC DNA]</scope>
    <source>
        <strain>168</strain>
    </source>
</reference>
<sequence>MHRGKGMKFVGDSRIPAEKKPNIPKDYSEYPGKTEAFWPNFLLKEWMVGAVFLIGFLVLTIVHQPPLERMADPTDTGYIPLPDWYFLFLYQLLKYEYAAGSFTVVGAMIMPGLAFGALLLAPFLDRGTERRPWKRPVAVGMMLLAISAAVFLTWQSVATHDWAKAEEQGKITKEADIDTNAEGYKVFKEQGCISCHGDNLQGGAAGPSLVDSGLKPDEIKKIAVEGKGKMPAGVFKGNDKQLEELAKFISETTAK</sequence>
<dbReference type="EMBL" id="U25535">
    <property type="protein sequence ID" value="AAA85562.1"/>
    <property type="molecule type" value="Genomic_DNA"/>
</dbReference>
<dbReference type="EMBL" id="L47709">
    <property type="protein sequence ID" value="AAB38437.1"/>
    <property type="molecule type" value="Genomic_DNA"/>
</dbReference>
<dbReference type="EMBL" id="AL009126">
    <property type="protein sequence ID" value="CAB14170.1"/>
    <property type="molecule type" value="Genomic_DNA"/>
</dbReference>
<dbReference type="PIR" id="D69687">
    <property type="entry name" value="D69687"/>
</dbReference>
<dbReference type="RefSeq" id="NP_390135.1">
    <property type="nucleotide sequence ID" value="NC_000964.3"/>
</dbReference>
<dbReference type="RefSeq" id="WP_003225562.1">
    <property type="nucleotide sequence ID" value="NZ_OZ025638.1"/>
</dbReference>
<dbReference type="SMR" id="P46913"/>
<dbReference type="FunCoup" id="P46913">
    <property type="interactions" value="92"/>
</dbReference>
<dbReference type="STRING" id="224308.BSU22540"/>
<dbReference type="TCDB" id="3.D.3.4.1">
    <property type="family name" value="the proton-translocating quinol:cytochrome c reductase (qcr) superfamily"/>
</dbReference>
<dbReference type="PaxDb" id="224308-BSU22540"/>
<dbReference type="EnsemblBacteria" id="CAB14170">
    <property type="protein sequence ID" value="CAB14170"/>
    <property type="gene ID" value="BSU_22540"/>
</dbReference>
<dbReference type="GeneID" id="939021"/>
<dbReference type="KEGG" id="bsu:BSU22540"/>
<dbReference type="PATRIC" id="fig|224308.179.peg.2458"/>
<dbReference type="eggNOG" id="COG1290">
    <property type="taxonomic scope" value="Bacteria"/>
</dbReference>
<dbReference type="eggNOG" id="COG2010">
    <property type="taxonomic scope" value="Bacteria"/>
</dbReference>
<dbReference type="InParanoid" id="P46913"/>
<dbReference type="OrthoDB" id="2380469at2"/>
<dbReference type="PhylomeDB" id="P46913"/>
<dbReference type="BioCyc" id="BSUB:BSU22540-MONOMER"/>
<dbReference type="BioCyc" id="MetaCyc:BSU22540-MONOMER"/>
<dbReference type="Proteomes" id="UP000001570">
    <property type="component" value="Chromosome"/>
</dbReference>
<dbReference type="GO" id="GO:0005886">
    <property type="term" value="C:plasma membrane"/>
    <property type="evidence" value="ECO:0007669"/>
    <property type="project" value="UniProtKB-SubCell"/>
</dbReference>
<dbReference type="GO" id="GO:0009055">
    <property type="term" value="F:electron transfer activity"/>
    <property type="evidence" value="ECO:0007669"/>
    <property type="project" value="InterPro"/>
</dbReference>
<dbReference type="GO" id="GO:0020037">
    <property type="term" value="F:heme binding"/>
    <property type="evidence" value="ECO:0007669"/>
    <property type="project" value="InterPro"/>
</dbReference>
<dbReference type="GO" id="GO:0005506">
    <property type="term" value="F:iron ion binding"/>
    <property type="evidence" value="ECO:0007669"/>
    <property type="project" value="InterPro"/>
</dbReference>
<dbReference type="GO" id="GO:0016491">
    <property type="term" value="F:oxidoreductase activity"/>
    <property type="evidence" value="ECO:0007669"/>
    <property type="project" value="InterPro"/>
</dbReference>
<dbReference type="FunFam" id="1.20.810.10:FF:000005">
    <property type="entry name" value="Menaquinol-cytochrome c reductase cytochrome b/c subunit"/>
    <property type="match status" value="1"/>
</dbReference>
<dbReference type="Gene3D" id="1.20.810.10">
    <property type="entry name" value="Cytochrome Bc1 Complex, Chain C"/>
    <property type="match status" value="1"/>
</dbReference>
<dbReference type="Gene3D" id="1.10.760.10">
    <property type="entry name" value="Cytochrome c-like domain"/>
    <property type="match status" value="1"/>
</dbReference>
<dbReference type="InterPro" id="IPR005798">
    <property type="entry name" value="Cyt_b/b6_C"/>
</dbReference>
<dbReference type="InterPro" id="IPR036150">
    <property type="entry name" value="Cyt_b/b6_C_sf"/>
</dbReference>
<dbReference type="InterPro" id="IPR009056">
    <property type="entry name" value="Cyt_c-like_dom"/>
</dbReference>
<dbReference type="InterPro" id="IPR036909">
    <property type="entry name" value="Cyt_c-like_dom_sf"/>
</dbReference>
<dbReference type="InterPro" id="IPR027387">
    <property type="entry name" value="Cytb/b6-like_sf"/>
</dbReference>
<dbReference type="InterPro" id="IPR051811">
    <property type="entry name" value="Cytochrome_c550/c551-like"/>
</dbReference>
<dbReference type="InterPro" id="IPR012049">
    <property type="entry name" value="MenaQ_cyt_c_Rdtase_cyt_b/c-su"/>
</dbReference>
<dbReference type="PANTHER" id="PTHR37823">
    <property type="entry name" value="CYTOCHROME C-553-LIKE"/>
    <property type="match status" value="1"/>
</dbReference>
<dbReference type="PANTHER" id="PTHR37823:SF4">
    <property type="entry name" value="MENAQUINOL-CYTOCHROME C REDUCTASE CYTOCHROME B_C SUBUNIT"/>
    <property type="match status" value="1"/>
</dbReference>
<dbReference type="Pfam" id="PF00032">
    <property type="entry name" value="Cytochrom_B_C"/>
    <property type="match status" value="1"/>
</dbReference>
<dbReference type="Pfam" id="PF13442">
    <property type="entry name" value="Cytochrome_CBB3"/>
    <property type="match status" value="1"/>
</dbReference>
<dbReference type="PIRSF" id="PIRSF036636">
    <property type="entry name" value="QcrC"/>
    <property type="match status" value="1"/>
</dbReference>
<dbReference type="SUPFAM" id="SSF81648">
    <property type="entry name" value="a domain/subunit of cytochrome bc1 complex (Ubiquinol-cytochrome c reductase)"/>
    <property type="match status" value="1"/>
</dbReference>
<dbReference type="SUPFAM" id="SSF46626">
    <property type="entry name" value="Cytochrome c"/>
    <property type="match status" value="1"/>
</dbReference>
<dbReference type="PROSITE" id="PS51003">
    <property type="entry name" value="CYTB_CTER"/>
    <property type="match status" value="1"/>
</dbReference>
<dbReference type="PROSITE" id="PS51007">
    <property type="entry name" value="CYTC"/>
    <property type="match status" value="1"/>
</dbReference>
<feature type="chain" id="PRO_0000061920" description="Menaquinol:cytochrome c reductase cytochrome c subunit">
    <location>
        <begin position="1"/>
        <end position="255"/>
    </location>
</feature>
<feature type="transmembrane region" description="Helical" evidence="2">
    <location>
        <begin position="46"/>
        <end position="62"/>
    </location>
</feature>
<feature type="transmembrane region" description="Helical" evidence="2">
    <location>
        <begin position="104"/>
        <end position="124"/>
    </location>
</feature>
<feature type="transmembrane region" description="Helical" evidence="2">
    <location>
        <begin position="137"/>
        <end position="157"/>
    </location>
</feature>
<feature type="domain" description="Cytochrome c" evidence="1">
    <location>
        <begin position="178"/>
        <end position="253"/>
    </location>
</feature>
<feature type="binding site" description="covalent" evidence="1">
    <location>
        <position position="192"/>
    </location>
    <ligand>
        <name>heme c</name>
        <dbReference type="ChEBI" id="CHEBI:61717"/>
    </ligand>
</feature>
<feature type="binding site" description="covalent" evidence="1">
    <location>
        <position position="195"/>
    </location>
    <ligand>
        <name>heme c</name>
        <dbReference type="ChEBI" id="CHEBI:61717"/>
    </ligand>
</feature>
<feature type="binding site" description="axial binding residue" evidence="1">
    <location>
        <position position="196"/>
    </location>
    <ligand>
        <name>heme c</name>
        <dbReference type="ChEBI" id="CHEBI:61717"/>
    </ligand>
    <ligandPart>
        <name>Fe</name>
        <dbReference type="ChEBI" id="CHEBI:18248"/>
    </ligandPart>
</feature>
<keyword id="KW-1003">Cell membrane</keyword>
<keyword id="KW-0249">Electron transport</keyword>
<keyword id="KW-0349">Heme</keyword>
<keyword id="KW-0408">Iron</keyword>
<keyword id="KW-0472">Membrane</keyword>
<keyword id="KW-0479">Metal-binding</keyword>
<keyword id="KW-1185">Reference proteome</keyword>
<keyword id="KW-0812">Transmembrane</keyword>
<keyword id="KW-1133">Transmembrane helix</keyword>
<keyword id="KW-0813">Transport</keyword>
<accession>P46913</accession>
<comment type="function">
    <text evidence="5">Component of the menaquinol:cytochrome c reductase complex.</text>
</comment>
<comment type="cofactor">
    <cofactor evidence="5">
        <name>heme c</name>
        <dbReference type="ChEBI" id="CHEBI:61717"/>
    </cofactor>
</comment>
<comment type="subunit">
    <text evidence="5">The main subunits of the menaquinol:cytochrome c complex are a Rieske-type iron-sulfur protein (QcrA), a cytochrome b (QcrB) and a cytochrome c (QcrC).</text>
</comment>
<comment type="subcellular location">
    <subcellularLocation>
        <location evidence="4">Cell membrane</location>
        <topology evidence="4">Multi-pass membrane protein</topology>
    </subcellularLocation>
</comment>
<comment type="similarity">
    <text evidence="2">Belongs to the cytochrome b family.</text>
</comment>
<gene>
    <name type="primary">qcrC</name>
    <name type="synonym">bfcC</name>
    <name type="ordered locus">BSU22540</name>
</gene>
<organism>
    <name type="scientific">Bacillus subtilis (strain 168)</name>
    <dbReference type="NCBI Taxonomy" id="224308"/>
    <lineage>
        <taxon>Bacteria</taxon>
        <taxon>Bacillati</taxon>
        <taxon>Bacillota</taxon>
        <taxon>Bacilli</taxon>
        <taxon>Bacillales</taxon>
        <taxon>Bacillaceae</taxon>
        <taxon>Bacillus</taxon>
    </lineage>
</organism>